<protein>
    <recommendedName>
        <fullName>U11/U12 small nuclear ribonucleoprotein 48 kDa protein</fullName>
        <shortName>U11/U12 snRNP 48 kDa protein</shortName>
        <shortName>U11/U12-48K</shortName>
    </recommendedName>
</protein>
<feature type="chain" id="PRO_0000089544" description="U11/U12 small nuclear ribonucleoprotein 48 kDa protein">
    <location>
        <begin position="1"/>
        <end position="339"/>
    </location>
</feature>
<feature type="zinc finger region" description="CHHC U11-48K-type" evidence="1">
    <location>
        <begin position="55"/>
        <end position="82"/>
    </location>
</feature>
<feature type="region of interest" description="Disordered" evidence="2">
    <location>
        <begin position="255"/>
        <end position="339"/>
    </location>
</feature>
<feature type="compositionally biased region" description="Basic residues" evidence="2">
    <location>
        <begin position="294"/>
        <end position="309"/>
    </location>
</feature>
<feature type="compositionally biased region" description="Basic and acidic residues" evidence="2">
    <location>
        <begin position="310"/>
        <end position="328"/>
    </location>
</feature>
<feature type="compositionally biased region" description="Basic residues" evidence="2">
    <location>
        <begin position="329"/>
        <end position="339"/>
    </location>
</feature>
<feature type="binding site" evidence="1">
    <location>
        <position position="58"/>
    </location>
    <ligand>
        <name>Zn(2+)</name>
        <dbReference type="ChEBI" id="CHEBI:29105"/>
    </ligand>
</feature>
<feature type="binding site" evidence="1">
    <location>
        <position position="64"/>
    </location>
    <ligand>
        <name>Zn(2+)</name>
        <dbReference type="ChEBI" id="CHEBI:29105"/>
    </ligand>
</feature>
<feature type="binding site" evidence="1">
    <location>
        <position position="74"/>
    </location>
    <ligand>
        <name>Zn(2+)</name>
        <dbReference type="ChEBI" id="CHEBI:29105"/>
    </ligand>
</feature>
<feature type="binding site" evidence="1">
    <location>
        <position position="78"/>
    </location>
    <ligand>
        <name>Zn(2+)</name>
        <dbReference type="ChEBI" id="CHEBI:29105"/>
    </ligand>
</feature>
<feature type="cross-link" description="Glycyl lysine isopeptide (Lys-Gly) (interchain with G-Cter in SUMO2)" evidence="9">
    <location>
        <position position="87"/>
    </location>
</feature>
<feature type="cross-link" description="Glycyl lysine isopeptide (Lys-Gly) (interchain with G-Cter in SUMO2)" evidence="9">
    <location>
        <position position="104"/>
    </location>
</feature>
<feature type="splice variant" id="VSP_014640" description="In isoform 2." evidence="7">
    <original>RIYSSLPVE</original>
    <variation>IIGVSIKRN</variation>
    <location>
        <begin position="136"/>
        <end position="144"/>
    </location>
</feature>
<feature type="splice variant" id="VSP_014641" description="In isoform 2." evidence="7">
    <location>
        <begin position="145"/>
        <end position="336"/>
    </location>
</feature>
<feature type="sequence variant" id="VAR_033678" description="In dbSNP:rs2757594." evidence="4">
    <original>P</original>
    <variation>L</variation>
    <location>
        <position position="45"/>
    </location>
</feature>
<feature type="sequence variant" id="VAR_050812" description="In dbSNP:rs3823184.">
    <original>R</original>
    <variation>Q</variation>
    <location>
        <position position="281"/>
    </location>
</feature>
<feature type="sequence conflict" description="In Ref. 2; AL832462." evidence="8" ref="2">
    <original>Y</original>
    <variation>C</variation>
    <location>
        <position position="237"/>
    </location>
</feature>
<feature type="strand" evidence="11">
    <location>
        <begin position="55"/>
        <end position="57"/>
    </location>
</feature>
<feature type="turn" evidence="10">
    <location>
        <begin position="59"/>
        <end position="61"/>
    </location>
</feature>
<feature type="strand" evidence="11">
    <location>
        <begin position="65"/>
        <end position="67"/>
    </location>
</feature>
<feature type="helix" evidence="10">
    <location>
        <begin position="68"/>
        <end position="70"/>
    </location>
</feature>
<feature type="helix" evidence="10">
    <location>
        <begin position="71"/>
        <end position="82"/>
    </location>
</feature>
<gene>
    <name type="primary">SNRNP48</name>
    <name type="synonym">C6orf151</name>
</gene>
<organism>
    <name type="scientific">Homo sapiens</name>
    <name type="common">Human</name>
    <dbReference type="NCBI Taxonomy" id="9606"/>
    <lineage>
        <taxon>Eukaryota</taxon>
        <taxon>Metazoa</taxon>
        <taxon>Chordata</taxon>
        <taxon>Craniata</taxon>
        <taxon>Vertebrata</taxon>
        <taxon>Euteleostomi</taxon>
        <taxon>Mammalia</taxon>
        <taxon>Eutheria</taxon>
        <taxon>Euarchontoglires</taxon>
        <taxon>Primates</taxon>
        <taxon>Haplorrhini</taxon>
        <taxon>Catarrhini</taxon>
        <taxon>Hominidae</taxon>
        <taxon>Homo</taxon>
    </lineage>
</organism>
<dbReference type="EMBL" id="AK056796">
    <property type="protein sequence ID" value="BAB71287.1"/>
    <property type="molecule type" value="mRNA"/>
</dbReference>
<dbReference type="EMBL" id="AK292409">
    <property type="protein sequence ID" value="BAF85098.1"/>
    <property type="molecule type" value="mRNA"/>
</dbReference>
<dbReference type="EMBL" id="AL832462">
    <property type="status" value="NOT_ANNOTATED_CDS"/>
    <property type="molecule type" value="mRNA"/>
</dbReference>
<dbReference type="EMBL" id="AL031058">
    <property type="status" value="NOT_ANNOTATED_CDS"/>
    <property type="molecule type" value="Genomic_DNA"/>
</dbReference>
<dbReference type="EMBL" id="AL390026">
    <property type="protein sequence ID" value="CAI20238.1"/>
    <property type="molecule type" value="Genomic_DNA"/>
</dbReference>
<dbReference type="EMBL" id="CH471087">
    <property type="protein sequence ID" value="EAW55216.1"/>
    <property type="molecule type" value="Genomic_DNA"/>
</dbReference>
<dbReference type="EMBL" id="BC114630">
    <property type="protein sequence ID" value="AAI14631.1"/>
    <property type="molecule type" value="mRNA"/>
</dbReference>
<dbReference type="EMBL" id="BC114631">
    <property type="protein sequence ID" value="AAI14632.1"/>
    <property type="molecule type" value="mRNA"/>
</dbReference>
<dbReference type="EMBL" id="BK005199">
    <property type="protein sequence ID" value="DAA05497.1"/>
    <property type="status" value="ALT_SEQ"/>
    <property type="molecule type" value="mRNA"/>
</dbReference>
<dbReference type="CCDS" id="CCDS4502.1">
    <molecule id="Q6IEG0-1"/>
</dbReference>
<dbReference type="RefSeq" id="NP_689764.3">
    <molecule id="Q6IEG0-1"/>
    <property type="nucleotide sequence ID" value="NM_152551.3"/>
</dbReference>
<dbReference type="PDB" id="2VY4">
    <property type="method" value="NMR"/>
    <property type="chains" value="A=53-87"/>
</dbReference>
<dbReference type="PDB" id="2VY5">
    <property type="method" value="NMR"/>
    <property type="chains" value="A=53-87"/>
</dbReference>
<dbReference type="PDB" id="8R7N">
    <property type="method" value="EM"/>
    <property type="resolution" value="3.40 A"/>
    <property type="chains" value="F=1-339"/>
</dbReference>
<dbReference type="PDB" id="8Y6O">
    <property type="method" value="EM"/>
    <property type="resolution" value="3.38 A"/>
    <property type="chains" value="Y=1-339"/>
</dbReference>
<dbReference type="PDB" id="9GBW">
    <property type="method" value="EM"/>
    <property type="resolution" value="3.50 A"/>
    <property type="chains" value="F=1-339"/>
</dbReference>
<dbReference type="PDB" id="9GC0">
    <property type="method" value="EM"/>
    <property type="resolution" value="3.20 A"/>
    <property type="chains" value="F=1-339"/>
</dbReference>
<dbReference type="PDB" id="9GCL">
    <property type="method" value="EM"/>
    <property type="resolution" value="3.00 A"/>
    <property type="chains" value="F=1-339"/>
</dbReference>
<dbReference type="PDBsum" id="2VY4"/>
<dbReference type="PDBsum" id="2VY5"/>
<dbReference type="PDBsum" id="8R7N"/>
<dbReference type="PDBsum" id="8Y6O"/>
<dbReference type="PDBsum" id="9GBW"/>
<dbReference type="PDBsum" id="9GC0"/>
<dbReference type="PDBsum" id="9GCL"/>
<dbReference type="EMDB" id="EMD-18984"/>
<dbReference type="EMDB" id="EMD-38993"/>
<dbReference type="EMDB" id="EMD-51223"/>
<dbReference type="EMDB" id="EMD-51226"/>
<dbReference type="EMDB" id="EMD-51233"/>
<dbReference type="SMR" id="Q6IEG0"/>
<dbReference type="BioGRID" id="127530">
    <property type="interactions" value="51"/>
</dbReference>
<dbReference type="CORUM" id="Q6IEG0"/>
<dbReference type="FunCoup" id="Q6IEG0">
    <property type="interactions" value="3783"/>
</dbReference>
<dbReference type="IntAct" id="Q6IEG0">
    <property type="interactions" value="29"/>
</dbReference>
<dbReference type="MINT" id="Q6IEG0"/>
<dbReference type="STRING" id="9606.ENSP00000339834"/>
<dbReference type="GlyGen" id="Q6IEG0">
    <property type="glycosylation" value="1 site, 1 O-linked glycan (1 site)"/>
</dbReference>
<dbReference type="iPTMnet" id="Q6IEG0"/>
<dbReference type="PhosphoSitePlus" id="Q6IEG0"/>
<dbReference type="BioMuta" id="SNRNP48"/>
<dbReference type="DMDM" id="71152380"/>
<dbReference type="jPOST" id="Q6IEG0"/>
<dbReference type="MassIVE" id="Q6IEG0"/>
<dbReference type="PaxDb" id="9606-ENSP00000339834"/>
<dbReference type="PeptideAtlas" id="Q6IEG0"/>
<dbReference type="ProteomicsDB" id="66412">
    <molecule id="Q6IEG0-1"/>
</dbReference>
<dbReference type="ProteomicsDB" id="66413">
    <molecule id="Q6IEG0-2"/>
</dbReference>
<dbReference type="Pumba" id="Q6IEG0"/>
<dbReference type="Antibodypedia" id="24691">
    <property type="antibodies" value="91 antibodies from 15 providers"/>
</dbReference>
<dbReference type="DNASU" id="154007"/>
<dbReference type="Ensembl" id="ENST00000342415.6">
    <molecule id="Q6IEG0-1"/>
    <property type="protein sequence ID" value="ENSP00000339834.4"/>
    <property type="gene ID" value="ENSG00000168566.13"/>
</dbReference>
<dbReference type="GeneID" id="154007"/>
<dbReference type="KEGG" id="hsa:154007"/>
<dbReference type="MANE-Select" id="ENST00000342415.6">
    <property type="protein sequence ID" value="ENSP00000339834.4"/>
    <property type="RefSeq nucleotide sequence ID" value="NM_152551.4"/>
    <property type="RefSeq protein sequence ID" value="NP_689764.3"/>
</dbReference>
<dbReference type="UCSC" id="uc003mxr.3">
    <molecule id="Q6IEG0-1"/>
    <property type="organism name" value="human"/>
</dbReference>
<dbReference type="AGR" id="HGNC:21368"/>
<dbReference type="CTD" id="154007"/>
<dbReference type="GeneCards" id="SNRNP48"/>
<dbReference type="HGNC" id="HGNC:21368">
    <property type="gene designation" value="SNRNP48"/>
</dbReference>
<dbReference type="HPA" id="ENSG00000168566">
    <property type="expression patterns" value="Low tissue specificity"/>
</dbReference>
<dbReference type="neXtProt" id="NX_Q6IEG0"/>
<dbReference type="OpenTargets" id="ENSG00000168566"/>
<dbReference type="PharmGKB" id="PA164726157"/>
<dbReference type="VEuPathDB" id="HostDB:ENSG00000168566"/>
<dbReference type="eggNOG" id="ENOG502QW2V">
    <property type="taxonomic scope" value="Eukaryota"/>
</dbReference>
<dbReference type="GeneTree" id="ENSGT00390000004886"/>
<dbReference type="HOGENOM" id="CLU_072333_0_0_1"/>
<dbReference type="InParanoid" id="Q6IEG0"/>
<dbReference type="OMA" id="DPNHQMP"/>
<dbReference type="OrthoDB" id="69229at2759"/>
<dbReference type="PAN-GO" id="Q6IEG0">
    <property type="GO annotations" value="3 GO annotations based on evolutionary models"/>
</dbReference>
<dbReference type="PhylomeDB" id="Q6IEG0"/>
<dbReference type="TreeFam" id="TF332204"/>
<dbReference type="PathwayCommons" id="Q6IEG0"/>
<dbReference type="Reactome" id="R-HSA-72165">
    <property type="pathway name" value="mRNA Splicing - Minor Pathway"/>
</dbReference>
<dbReference type="SignaLink" id="Q6IEG0"/>
<dbReference type="BioGRID-ORCS" id="154007">
    <property type="hits" value="401 hits in 1160 CRISPR screens"/>
</dbReference>
<dbReference type="ChiTaRS" id="SNRNP48">
    <property type="organism name" value="human"/>
</dbReference>
<dbReference type="EvolutionaryTrace" id="Q6IEG0"/>
<dbReference type="GenomeRNAi" id="154007"/>
<dbReference type="Pharos" id="Q6IEG0">
    <property type="development level" value="Tbio"/>
</dbReference>
<dbReference type="PRO" id="PR:Q6IEG0"/>
<dbReference type="Proteomes" id="UP000005640">
    <property type="component" value="Chromosome 6"/>
</dbReference>
<dbReference type="RNAct" id="Q6IEG0">
    <property type="molecule type" value="protein"/>
</dbReference>
<dbReference type="Bgee" id="ENSG00000168566">
    <property type="expression patterns" value="Expressed in buccal mucosa cell and 173 other cell types or tissues"/>
</dbReference>
<dbReference type="ExpressionAtlas" id="Q6IEG0">
    <property type="expression patterns" value="baseline and differential"/>
</dbReference>
<dbReference type="GO" id="GO:0005829">
    <property type="term" value="C:cytosol"/>
    <property type="evidence" value="ECO:0000314"/>
    <property type="project" value="HPA"/>
</dbReference>
<dbReference type="GO" id="GO:0005654">
    <property type="term" value="C:nucleoplasm"/>
    <property type="evidence" value="ECO:0000314"/>
    <property type="project" value="HPA"/>
</dbReference>
<dbReference type="GO" id="GO:0005689">
    <property type="term" value="C:U12-type spliceosomal complex"/>
    <property type="evidence" value="ECO:0000314"/>
    <property type="project" value="HGNC-UCL"/>
</dbReference>
<dbReference type="GO" id="GO:0008270">
    <property type="term" value="F:zinc ion binding"/>
    <property type="evidence" value="ECO:0007669"/>
    <property type="project" value="UniProtKB-KW"/>
</dbReference>
<dbReference type="GO" id="GO:0006397">
    <property type="term" value="P:mRNA processing"/>
    <property type="evidence" value="ECO:0007669"/>
    <property type="project" value="UniProtKB-KW"/>
</dbReference>
<dbReference type="GO" id="GO:0008380">
    <property type="term" value="P:RNA splicing"/>
    <property type="evidence" value="ECO:0000305"/>
    <property type="project" value="HGNC-UCL"/>
</dbReference>
<dbReference type="InterPro" id="IPR022776">
    <property type="entry name" value="TRM13/UPF0224_CHHC_Znf_dom"/>
</dbReference>
<dbReference type="InterPro" id="IPR051591">
    <property type="entry name" value="UPF0224_FAM112_RNA_Proc"/>
</dbReference>
<dbReference type="InterPro" id="IPR036236">
    <property type="entry name" value="Znf_C2H2_sf"/>
</dbReference>
<dbReference type="PANTHER" id="PTHR21402">
    <property type="entry name" value="GAMETOCYTE SPECIFIC FACTOR 1-RELATED"/>
    <property type="match status" value="1"/>
</dbReference>
<dbReference type="PANTHER" id="PTHR21402:SF10">
    <property type="entry name" value="U11_U12 SMALL NUCLEAR RIBONUCLEOPROTEIN 48 KDA PROTEIN"/>
    <property type="match status" value="1"/>
</dbReference>
<dbReference type="Pfam" id="PF05253">
    <property type="entry name" value="zf-U11-48K"/>
    <property type="match status" value="1"/>
</dbReference>
<dbReference type="SUPFAM" id="SSF57667">
    <property type="entry name" value="beta-beta-alpha zinc fingers"/>
    <property type="match status" value="1"/>
</dbReference>
<dbReference type="PROSITE" id="PS51800">
    <property type="entry name" value="ZF_CHHC_U11_48K"/>
    <property type="match status" value="1"/>
</dbReference>
<reference key="1">
    <citation type="journal article" date="2004" name="Nat. Genet.">
        <title>Complete sequencing and characterization of 21,243 full-length human cDNAs.</title>
        <authorList>
            <person name="Ota T."/>
            <person name="Suzuki Y."/>
            <person name="Nishikawa T."/>
            <person name="Otsuki T."/>
            <person name="Sugiyama T."/>
            <person name="Irie R."/>
            <person name="Wakamatsu A."/>
            <person name="Hayashi K."/>
            <person name="Sato H."/>
            <person name="Nagai K."/>
            <person name="Kimura K."/>
            <person name="Makita H."/>
            <person name="Sekine M."/>
            <person name="Obayashi M."/>
            <person name="Nishi T."/>
            <person name="Shibahara T."/>
            <person name="Tanaka T."/>
            <person name="Ishii S."/>
            <person name="Yamamoto J."/>
            <person name="Saito K."/>
            <person name="Kawai Y."/>
            <person name="Isono Y."/>
            <person name="Nakamura Y."/>
            <person name="Nagahari K."/>
            <person name="Murakami K."/>
            <person name="Yasuda T."/>
            <person name="Iwayanagi T."/>
            <person name="Wagatsuma M."/>
            <person name="Shiratori A."/>
            <person name="Sudo H."/>
            <person name="Hosoiri T."/>
            <person name="Kaku Y."/>
            <person name="Kodaira H."/>
            <person name="Kondo H."/>
            <person name="Sugawara M."/>
            <person name="Takahashi M."/>
            <person name="Kanda K."/>
            <person name="Yokoi T."/>
            <person name="Furuya T."/>
            <person name="Kikkawa E."/>
            <person name="Omura Y."/>
            <person name="Abe K."/>
            <person name="Kamihara K."/>
            <person name="Katsuta N."/>
            <person name="Sato K."/>
            <person name="Tanikawa M."/>
            <person name="Yamazaki M."/>
            <person name="Ninomiya K."/>
            <person name="Ishibashi T."/>
            <person name="Yamashita H."/>
            <person name="Murakawa K."/>
            <person name="Fujimori K."/>
            <person name="Tanai H."/>
            <person name="Kimata M."/>
            <person name="Watanabe M."/>
            <person name="Hiraoka S."/>
            <person name="Chiba Y."/>
            <person name="Ishida S."/>
            <person name="Ono Y."/>
            <person name="Takiguchi S."/>
            <person name="Watanabe S."/>
            <person name="Yosida M."/>
            <person name="Hotuta T."/>
            <person name="Kusano J."/>
            <person name="Kanehori K."/>
            <person name="Takahashi-Fujii A."/>
            <person name="Hara H."/>
            <person name="Tanase T.-O."/>
            <person name="Nomura Y."/>
            <person name="Togiya S."/>
            <person name="Komai F."/>
            <person name="Hara R."/>
            <person name="Takeuchi K."/>
            <person name="Arita M."/>
            <person name="Imose N."/>
            <person name="Musashino K."/>
            <person name="Yuuki H."/>
            <person name="Oshima A."/>
            <person name="Sasaki N."/>
            <person name="Aotsuka S."/>
            <person name="Yoshikawa Y."/>
            <person name="Matsunawa H."/>
            <person name="Ichihara T."/>
            <person name="Shiohata N."/>
            <person name="Sano S."/>
            <person name="Moriya S."/>
            <person name="Momiyama H."/>
            <person name="Satoh N."/>
            <person name="Takami S."/>
            <person name="Terashima Y."/>
            <person name="Suzuki O."/>
            <person name="Nakagawa S."/>
            <person name="Senoh A."/>
            <person name="Mizoguchi H."/>
            <person name="Goto Y."/>
            <person name="Shimizu F."/>
            <person name="Wakebe H."/>
            <person name="Hishigaki H."/>
            <person name="Watanabe T."/>
            <person name="Sugiyama A."/>
            <person name="Takemoto M."/>
            <person name="Kawakami B."/>
            <person name="Yamazaki M."/>
            <person name="Watanabe K."/>
            <person name="Kumagai A."/>
            <person name="Itakura S."/>
            <person name="Fukuzumi Y."/>
            <person name="Fujimori Y."/>
            <person name="Komiyama M."/>
            <person name="Tashiro H."/>
            <person name="Tanigami A."/>
            <person name="Fujiwara T."/>
            <person name="Ono T."/>
            <person name="Yamada K."/>
            <person name="Fujii Y."/>
            <person name="Ozaki K."/>
            <person name="Hirao M."/>
            <person name="Ohmori Y."/>
            <person name="Kawabata A."/>
            <person name="Hikiji T."/>
            <person name="Kobatake N."/>
            <person name="Inagaki H."/>
            <person name="Ikema Y."/>
            <person name="Okamoto S."/>
            <person name="Okitani R."/>
            <person name="Kawakami T."/>
            <person name="Noguchi S."/>
            <person name="Itoh T."/>
            <person name="Shigeta K."/>
            <person name="Senba T."/>
            <person name="Matsumura K."/>
            <person name="Nakajima Y."/>
            <person name="Mizuno T."/>
            <person name="Morinaga M."/>
            <person name="Sasaki M."/>
            <person name="Togashi T."/>
            <person name="Oyama M."/>
            <person name="Hata H."/>
            <person name="Watanabe M."/>
            <person name="Komatsu T."/>
            <person name="Mizushima-Sugano J."/>
            <person name="Satoh T."/>
            <person name="Shirai Y."/>
            <person name="Takahashi Y."/>
            <person name="Nakagawa K."/>
            <person name="Okumura K."/>
            <person name="Nagase T."/>
            <person name="Nomura N."/>
            <person name="Kikuchi H."/>
            <person name="Masuho Y."/>
            <person name="Yamashita R."/>
            <person name="Nakai K."/>
            <person name="Yada T."/>
            <person name="Nakamura Y."/>
            <person name="Ohara O."/>
            <person name="Isogai T."/>
            <person name="Sugano S."/>
        </authorList>
    </citation>
    <scope>NUCLEOTIDE SEQUENCE [LARGE SCALE MRNA] (ISOFORMS 1 AND 2)</scope>
    <source>
        <tissue>Placenta</tissue>
        <tissue>Testis</tissue>
    </source>
</reference>
<reference key="2">
    <citation type="journal article" date="2007" name="BMC Genomics">
        <title>The full-ORF clone resource of the German cDNA consortium.</title>
        <authorList>
            <person name="Bechtel S."/>
            <person name="Rosenfelder H."/>
            <person name="Duda A."/>
            <person name="Schmidt C.P."/>
            <person name="Ernst U."/>
            <person name="Wellenreuther R."/>
            <person name="Mehrle A."/>
            <person name="Schuster C."/>
            <person name="Bahr A."/>
            <person name="Bloecker H."/>
            <person name="Heubner D."/>
            <person name="Hoerlein A."/>
            <person name="Michel G."/>
            <person name="Wedler H."/>
            <person name="Koehrer K."/>
            <person name="Ottenwaelder B."/>
            <person name="Poustka A."/>
            <person name="Wiemann S."/>
            <person name="Schupp I."/>
        </authorList>
    </citation>
    <scope>NUCLEOTIDE SEQUENCE [LARGE SCALE MRNA] (ISOFORM 1)</scope>
    <source>
        <tissue>Fetal skin</tissue>
    </source>
</reference>
<reference key="3">
    <citation type="journal article" date="2003" name="Nature">
        <title>The DNA sequence and analysis of human chromosome 6.</title>
        <authorList>
            <person name="Mungall A.J."/>
            <person name="Palmer S.A."/>
            <person name="Sims S.K."/>
            <person name="Edwards C.A."/>
            <person name="Ashurst J.L."/>
            <person name="Wilming L."/>
            <person name="Jones M.C."/>
            <person name="Horton R."/>
            <person name="Hunt S.E."/>
            <person name="Scott C.E."/>
            <person name="Gilbert J.G.R."/>
            <person name="Clamp M.E."/>
            <person name="Bethel G."/>
            <person name="Milne S."/>
            <person name="Ainscough R."/>
            <person name="Almeida J.P."/>
            <person name="Ambrose K.D."/>
            <person name="Andrews T.D."/>
            <person name="Ashwell R.I.S."/>
            <person name="Babbage A.K."/>
            <person name="Bagguley C.L."/>
            <person name="Bailey J."/>
            <person name="Banerjee R."/>
            <person name="Barker D.J."/>
            <person name="Barlow K.F."/>
            <person name="Bates K."/>
            <person name="Beare D.M."/>
            <person name="Beasley H."/>
            <person name="Beasley O."/>
            <person name="Bird C.P."/>
            <person name="Blakey S.E."/>
            <person name="Bray-Allen S."/>
            <person name="Brook J."/>
            <person name="Brown A.J."/>
            <person name="Brown J.Y."/>
            <person name="Burford D.C."/>
            <person name="Burrill W."/>
            <person name="Burton J."/>
            <person name="Carder C."/>
            <person name="Carter N.P."/>
            <person name="Chapman J.C."/>
            <person name="Clark S.Y."/>
            <person name="Clark G."/>
            <person name="Clee C.M."/>
            <person name="Clegg S."/>
            <person name="Cobley V."/>
            <person name="Collier R.E."/>
            <person name="Collins J.E."/>
            <person name="Colman L.K."/>
            <person name="Corby N.R."/>
            <person name="Coville G.J."/>
            <person name="Culley K.M."/>
            <person name="Dhami P."/>
            <person name="Davies J."/>
            <person name="Dunn M."/>
            <person name="Earthrowl M.E."/>
            <person name="Ellington A.E."/>
            <person name="Evans K.A."/>
            <person name="Faulkner L."/>
            <person name="Francis M.D."/>
            <person name="Frankish A."/>
            <person name="Frankland J."/>
            <person name="French L."/>
            <person name="Garner P."/>
            <person name="Garnett J."/>
            <person name="Ghori M.J."/>
            <person name="Gilby L.M."/>
            <person name="Gillson C.J."/>
            <person name="Glithero R.J."/>
            <person name="Grafham D.V."/>
            <person name="Grant M."/>
            <person name="Gribble S."/>
            <person name="Griffiths C."/>
            <person name="Griffiths M.N.D."/>
            <person name="Hall R."/>
            <person name="Halls K.S."/>
            <person name="Hammond S."/>
            <person name="Harley J.L."/>
            <person name="Hart E.A."/>
            <person name="Heath P.D."/>
            <person name="Heathcott R."/>
            <person name="Holmes S.J."/>
            <person name="Howden P.J."/>
            <person name="Howe K.L."/>
            <person name="Howell G.R."/>
            <person name="Huckle E."/>
            <person name="Humphray S.J."/>
            <person name="Humphries M.D."/>
            <person name="Hunt A.R."/>
            <person name="Johnson C.M."/>
            <person name="Joy A.A."/>
            <person name="Kay M."/>
            <person name="Keenan S.J."/>
            <person name="Kimberley A.M."/>
            <person name="King A."/>
            <person name="Laird G.K."/>
            <person name="Langford C."/>
            <person name="Lawlor S."/>
            <person name="Leongamornlert D.A."/>
            <person name="Leversha M."/>
            <person name="Lloyd C.R."/>
            <person name="Lloyd D.M."/>
            <person name="Loveland J.E."/>
            <person name="Lovell J."/>
            <person name="Martin S."/>
            <person name="Mashreghi-Mohammadi M."/>
            <person name="Maslen G.L."/>
            <person name="Matthews L."/>
            <person name="McCann O.T."/>
            <person name="McLaren S.J."/>
            <person name="McLay K."/>
            <person name="McMurray A."/>
            <person name="Moore M.J.F."/>
            <person name="Mullikin J.C."/>
            <person name="Niblett D."/>
            <person name="Nickerson T."/>
            <person name="Novik K.L."/>
            <person name="Oliver K."/>
            <person name="Overton-Larty E.K."/>
            <person name="Parker A."/>
            <person name="Patel R."/>
            <person name="Pearce A.V."/>
            <person name="Peck A.I."/>
            <person name="Phillimore B.J.C.T."/>
            <person name="Phillips S."/>
            <person name="Plumb R.W."/>
            <person name="Porter K.M."/>
            <person name="Ramsey Y."/>
            <person name="Ranby S.A."/>
            <person name="Rice C.M."/>
            <person name="Ross M.T."/>
            <person name="Searle S.M."/>
            <person name="Sehra H.K."/>
            <person name="Sheridan E."/>
            <person name="Skuce C.D."/>
            <person name="Smith S."/>
            <person name="Smith M."/>
            <person name="Spraggon L."/>
            <person name="Squares S.L."/>
            <person name="Steward C.A."/>
            <person name="Sycamore N."/>
            <person name="Tamlyn-Hall G."/>
            <person name="Tester J."/>
            <person name="Theaker A.J."/>
            <person name="Thomas D.W."/>
            <person name="Thorpe A."/>
            <person name="Tracey A."/>
            <person name="Tromans A."/>
            <person name="Tubby B."/>
            <person name="Wall M."/>
            <person name="Wallis J.M."/>
            <person name="West A.P."/>
            <person name="White S.S."/>
            <person name="Whitehead S.L."/>
            <person name="Whittaker H."/>
            <person name="Wild A."/>
            <person name="Willey D.J."/>
            <person name="Wilmer T.E."/>
            <person name="Wood J.M."/>
            <person name="Wray P.W."/>
            <person name="Wyatt J.C."/>
            <person name="Young L."/>
            <person name="Younger R.M."/>
            <person name="Bentley D.R."/>
            <person name="Coulson A."/>
            <person name="Durbin R.M."/>
            <person name="Hubbard T."/>
            <person name="Sulston J.E."/>
            <person name="Dunham I."/>
            <person name="Rogers J."/>
            <person name="Beck S."/>
        </authorList>
    </citation>
    <scope>NUCLEOTIDE SEQUENCE [LARGE SCALE GENOMIC DNA]</scope>
</reference>
<reference key="4">
    <citation type="submission" date="2005-07" db="EMBL/GenBank/DDBJ databases">
        <authorList>
            <person name="Mural R.J."/>
            <person name="Istrail S."/>
            <person name="Sutton G.G."/>
            <person name="Florea L."/>
            <person name="Halpern A.L."/>
            <person name="Mobarry C.M."/>
            <person name="Lippert R."/>
            <person name="Walenz B."/>
            <person name="Shatkay H."/>
            <person name="Dew I."/>
            <person name="Miller J.R."/>
            <person name="Flanigan M.J."/>
            <person name="Edwards N.J."/>
            <person name="Bolanos R."/>
            <person name="Fasulo D."/>
            <person name="Halldorsson B.V."/>
            <person name="Hannenhalli S."/>
            <person name="Turner R."/>
            <person name="Yooseph S."/>
            <person name="Lu F."/>
            <person name="Nusskern D.R."/>
            <person name="Shue B.C."/>
            <person name="Zheng X.H."/>
            <person name="Zhong F."/>
            <person name="Delcher A.L."/>
            <person name="Huson D.H."/>
            <person name="Kravitz S.A."/>
            <person name="Mouchard L."/>
            <person name="Reinert K."/>
            <person name="Remington K.A."/>
            <person name="Clark A.G."/>
            <person name="Waterman M.S."/>
            <person name="Eichler E.E."/>
            <person name="Adams M.D."/>
            <person name="Hunkapiller M.W."/>
            <person name="Myers E.W."/>
            <person name="Venter J.C."/>
        </authorList>
    </citation>
    <scope>NUCLEOTIDE SEQUENCE [LARGE SCALE GENOMIC DNA]</scope>
</reference>
<reference key="5">
    <citation type="journal article" date="2004" name="Genome Res.">
        <title>The status, quality, and expansion of the NIH full-length cDNA project: the Mammalian Gene Collection (MGC).</title>
        <authorList>
            <consortium name="The MGC Project Team"/>
        </authorList>
    </citation>
    <scope>NUCLEOTIDE SEQUENCE [LARGE SCALE MRNA] (ISOFORM 1)</scope>
    <scope>VARIANT LEU-45</scope>
</reference>
<reference key="6">
    <citation type="journal article" date="2004" name="RNA">
        <title>The human 18S U11/U12 snRNP contains a set of novel proteins not found in the U2-dependent spliceosome.</title>
        <authorList>
            <person name="Will C.L."/>
            <person name="Schneider C."/>
            <person name="Hossbach M."/>
            <person name="Urlaub H."/>
            <person name="Rauhut R."/>
            <person name="Elbashir S."/>
            <person name="Tuschl T."/>
            <person name="Luehrmann R."/>
        </authorList>
    </citation>
    <scope>IDENTIFICATION IN A COMPLEX WITH THE U11/U12 SPLICEOSOME</scope>
    <scope>SUBCELLULAR LOCATION</scope>
    <scope>IDENTIFICATION BY MASS SPECTROMETRY</scope>
</reference>
<reference key="7">
    <citation type="journal article" date="2008" name="Bioinformatics">
        <title>A novel CHHC Zn-finger domain found in spliceosomal proteins and tRNA modifying enzymes.</title>
        <authorList>
            <person name="Andreeva A."/>
            <person name="Tidow H."/>
        </authorList>
    </citation>
    <scope>DOMAIN CHHC ZINC-FINGER</scope>
</reference>
<reference key="8">
    <citation type="journal article" date="2017" name="Nat. Struct. Mol. Biol.">
        <title>Site-specific mapping of the human SUMO proteome reveals co-modification with phosphorylation.</title>
        <authorList>
            <person name="Hendriks I.A."/>
            <person name="Lyon D."/>
            <person name="Young C."/>
            <person name="Jensen L.J."/>
            <person name="Vertegaal A.C."/>
            <person name="Nielsen M.L."/>
        </authorList>
    </citation>
    <scope>SUMOYLATION [LARGE SCALE ANALYSIS] AT LYS-87 AND LYS-104</scope>
    <scope>IDENTIFICATION BY MASS SPECTROMETRY [LARGE SCALE ANALYSIS]</scope>
</reference>
<reference key="9">
    <citation type="journal article" date="2009" name="Structure">
        <title>Solution structure of the U11-48K CHHC zinc-finger domain that specifically binds the 5' splice site of U12-type introns.</title>
        <authorList>
            <person name="Tidow H."/>
            <person name="Andreeva A."/>
            <person name="Rutherford T.J."/>
            <person name="Fersht A.R."/>
        </authorList>
    </citation>
    <scope>STRUCTURE BY NMR OF 53-87</scope>
    <scope>DOMAIN CHHC ZINC-FINGER</scope>
    <scope>FUNCTION</scope>
</reference>
<sequence>MEGEPPPVEERRRLQEELNEFVESGCRTLEEVTASLGWDLDSLDPGEEEAAEDEVVICPYDSNHHMPKSSLAKHMASCRLRKMGYTKEEEDEMYNPEFFYENVKIPSITLNKDSQFQIIKQARTAVGKDSDCYNQRIYSSLPVEVPLNHKRFVCDLTQADRLALYDFVVEETKKKRSDSQIIENDSDLFVDLAAKINQDNSRKSPKSYLEILAEVRDYKRRRQSYRAKNVHITKKSYTEVIRDVINVHMEELSNHWQEEQEKAEDDAEKNEERRSASVDSRQSGGSYLDAECSRHRRDRSRSPHKRKRNKDKDKNCESRRRKERDGERHHSHKRRKQKI</sequence>
<proteinExistence type="evidence at protein level"/>
<name>SNR48_HUMAN</name>
<evidence type="ECO:0000255" key="1">
    <source>
        <dbReference type="PROSITE-ProRule" id="PRU01141"/>
    </source>
</evidence>
<evidence type="ECO:0000256" key="2">
    <source>
        <dbReference type="SAM" id="MobiDB-lite"/>
    </source>
</evidence>
<evidence type="ECO:0000269" key="3">
    <source>
    </source>
</evidence>
<evidence type="ECO:0000269" key="4">
    <source>
    </source>
</evidence>
<evidence type="ECO:0000269" key="5">
    <source>
    </source>
</evidence>
<evidence type="ECO:0000269" key="6">
    <source>
    </source>
</evidence>
<evidence type="ECO:0000303" key="7">
    <source>
    </source>
</evidence>
<evidence type="ECO:0000305" key="8"/>
<evidence type="ECO:0007744" key="9">
    <source>
    </source>
</evidence>
<evidence type="ECO:0007829" key="10">
    <source>
        <dbReference type="PDB" id="2VY4"/>
    </source>
</evidence>
<evidence type="ECO:0007829" key="11">
    <source>
        <dbReference type="PDB" id="2VY5"/>
    </source>
</evidence>
<accession>Q6IEG0</accession>
<accession>A8K8P4</accession>
<accession>Q14C91</accession>
<accession>Q5T339</accession>
<accession>Q5THM1</accession>
<accession>Q5THM2</accession>
<accession>Q96MK1</accession>
<keyword id="KW-0002">3D-structure</keyword>
<keyword id="KW-0025">Alternative splicing</keyword>
<keyword id="KW-1017">Isopeptide bond</keyword>
<keyword id="KW-0479">Metal-binding</keyword>
<keyword id="KW-0507">mRNA processing</keyword>
<keyword id="KW-0508">mRNA splicing</keyword>
<keyword id="KW-0539">Nucleus</keyword>
<keyword id="KW-1267">Proteomics identification</keyword>
<keyword id="KW-1185">Reference proteome</keyword>
<keyword id="KW-0747">Spliceosome</keyword>
<keyword id="KW-0832">Ubl conjugation</keyword>
<keyword id="KW-0862">Zinc</keyword>
<keyword id="KW-0863">Zinc-finger</keyword>
<comment type="function">
    <text evidence="6">Likely involved in U12-type 5' splice site recognition.</text>
</comment>
<comment type="subunit">
    <text evidence="3">Component of the U11/U12 snRNPs that are part of the U12-type spliceosome. Not found in the major spliceosome.</text>
</comment>
<comment type="interaction">
    <interactant intactId="EBI-2876632">
        <id>Q6IEG0</id>
    </interactant>
    <interactant intactId="EBI-5278764">
        <id>Q96GN5</id>
        <label>CDCA7L</label>
    </interactant>
    <organismsDiffer>false</organismsDiffer>
    <experiments>3</experiments>
</comment>
<comment type="interaction">
    <interactant intactId="EBI-2876632">
        <id>Q6IEG0</id>
    </interactant>
    <interactant intactId="EBI-744099">
        <id>Q9H0I2</id>
        <label>ENKD1</label>
    </interactant>
    <organismsDiffer>false</organismsDiffer>
    <experiments>3</experiments>
</comment>
<comment type="interaction">
    <interactant intactId="EBI-2876632">
        <id>Q6IEG0</id>
    </interactant>
    <interactant intactId="EBI-5235340">
        <id>Q7Z699</id>
        <label>SPRED1</label>
    </interactant>
    <organismsDiffer>false</organismsDiffer>
    <experiments>3</experiments>
</comment>
<comment type="interaction">
    <interactant intactId="EBI-2876632">
        <id>Q6IEG0</id>
    </interactant>
    <interactant intactId="EBI-7353612">
        <id>P57075-2</id>
        <label>UBASH3A</label>
    </interactant>
    <organismsDiffer>false</organismsDiffer>
    <experiments>3</experiments>
</comment>
<comment type="subcellular location">
    <subcellularLocation>
        <location evidence="3">Nucleus</location>
    </subcellularLocation>
</comment>
<comment type="alternative products">
    <event type="alternative splicing"/>
    <isoform>
        <id>Q6IEG0-1</id>
        <name>1</name>
        <sequence type="displayed"/>
    </isoform>
    <isoform>
        <id>Q6IEG0-2</id>
        <name>2</name>
        <sequence type="described" ref="VSP_014640 VSP_014641"/>
    </isoform>
</comment>
<comment type="domain">
    <text evidence="5 6">The CHHC region interacts with the 5' splice site of the U12-type intron.</text>
</comment>